<sequence length="623" mass="69068">MPHSDELDAGNVLAVENLNIAFMQDQQKIAAVRNLSFSLQRGETLAIVGESGSGKSVTALALMRLLEQAGGLVQCDKMLLRRRSRDVIELSEQSAAQMRHVRGADMAMIFQEPMTSLNPVFTVGEQIAESIRLHQNASREEAMVEAKRMLDQVRIPEAQTILSRYSHQLSGGMRQRVMIAMALSCRPAVLIADEPTTALDVTIQAQILQLIKVLQKEMSMGVIFITHDMGVVAEIADRVLVIYQGEAVETGTVEQIFHAPQHPYTRALLAAVPQLGAMKGLDYPRRFPLISLEHPAKQEPPIEQKTVVDGEPVLRVRNLVTRFPLRSGLLNRVTREVHAVEKVSFDLWPGETLSLVGESGSGKSTTGRALLRLVESQGGEIIFNGQRIDTLSPGKLQALRRDIQFIFQDPYASLDPRQTIGDSIIEPLRVHGLLPGKDAAARVAWLLERVGLLPEHAWRYPHEFSGGQRQRICIARALALNPKVIIADEAVSALDVSIRGQIINLLLDLQRDFGIAYLFISHDMAVVERISHRVAVMYLGQIVEIGSRCAVFENPQHPYTRKLLAAVPVAEPSRQRPQRVLLSDDLPSNIHLRGEEVAAVSLQCVGPGHYVAQPQSEYAFMRR</sequence>
<gene>
    <name evidence="1" type="primary">gsiA</name>
    <name type="ordered locus">SFV_0812</name>
</gene>
<proteinExistence type="inferred from homology"/>
<name>GSIA_SHIF8</name>
<evidence type="ECO:0000250" key="1">
    <source>
        <dbReference type="UniProtKB" id="P75796"/>
    </source>
</evidence>
<evidence type="ECO:0000255" key="2">
    <source>
        <dbReference type="PROSITE-ProRule" id="PRU00434"/>
    </source>
</evidence>
<evidence type="ECO:0000305" key="3"/>
<keyword id="KW-0067">ATP-binding</keyword>
<keyword id="KW-0997">Cell inner membrane</keyword>
<keyword id="KW-1003">Cell membrane</keyword>
<keyword id="KW-0378">Hydrolase</keyword>
<keyword id="KW-0472">Membrane</keyword>
<keyword id="KW-0547">Nucleotide-binding</keyword>
<keyword id="KW-0677">Repeat</keyword>
<keyword id="KW-1278">Translocase</keyword>
<keyword id="KW-0813">Transport</keyword>
<dbReference type="EC" id="7.4.2.10" evidence="1"/>
<dbReference type="EMBL" id="CP000266">
    <property type="protein sequence ID" value="ABF03043.1"/>
    <property type="status" value="ALT_INIT"/>
    <property type="molecule type" value="Genomic_DNA"/>
</dbReference>
<dbReference type="RefSeq" id="WP_001120567.1">
    <property type="nucleotide sequence ID" value="NC_008258.1"/>
</dbReference>
<dbReference type="SMR" id="Q0T6D3"/>
<dbReference type="KEGG" id="sfv:SFV_0812"/>
<dbReference type="HOGENOM" id="CLU_000604_86_2_6"/>
<dbReference type="Proteomes" id="UP000000659">
    <property type="component" value="Chromosome"/>
</dbReference>
<dbReference type="GO" id="GO:0005886">
    <property type="term" value="C:plasma membrane"/>
    <property type="evidence" value="ECO:0007669"/>
    <property type="project" value="UniProtKB-SubCell"/>
</dbReference>
<dbReference type="GO" id="GO:0005524">
    <property type="term" value="F:ATP binding"/>
    <property type="evidence" value="ECO:0007669"/>
    <property type="project" value="UniProtKB-KW"/>
</dbReference>
<dbReference type="GO" id="GO:0016887">
    <property type="term" value="F:ATP hydrolysis activity"/>
    <property type="evidence" value="ECO:0007669"/>
    <property type="project" value="InterPro"/>
</dbReference>
<dbReference type="GO" id="GO:0015833">
    <property type="term" value="P:peptide transport"/>
    <property type="evidence" value="ECO:0007669"/>
    <property type="project" value="InterPro"/>
</dbReference>
<dbReference type="GO" id="GO:0055085">
    <property type="term" value="P:transmembrane transport"/>
    <property type="evidence" value="ECO:0007669"/>
    <property type="project" value="UniProtKB-ARBA"/>
</dbReference>
<dbReference type="CDD" id="cd03257">
    <property type="entry name" value="ABC_NikE_OppD_transporters"/>
    <property type="match status" value="2"/>
</dbReference>
<dbReference type="FunFam" id="3.40.50.300:FF:001061">
    <property type="entry name" value="Glutathione import ATP-binding protein GsiA"/>
    <property type="match status" value="1"/>
</dbReference>
<dbReference type="FunFam" id="3.40.50.300:FF:000016">
    <property type="entry name" value="Oligopeptide ABC transporter ATP-binding component"/>
    <property type="match status" value="1"/>
</dbReference>
<dbReference type="Gene3D" id="3.40.50.300">
    <property type="entry name" value="P-loop containing nucleotide triphosphate hydrolases"/>
    <property type="match status" value="2"/>
</dbReference>
<dbReference type="InterPro" id="IPR003593">
    <property type="entry name" value="AAA+_ATPase"/>
</dbReference>
<dbReference type="InterPro" id="IPR050319">
    <property type="entry name" value="ABC_transp_ATP-bind"/>
</dbReference>
<dbReference type="InterPro" id="IPR003439">
    <property type="entry name" value="ABC_transporter-like_ATP-bd"/>
</dbReference>
<dbReference type="InterPro" id="IPR017871">
    <property type="entry name" value="ABC_transporter-like_CS"/>
</dbReference>
<dbReference type="InterPro" id="IPR013563">
    <property type="entry name" value="Oligopep_ABC_C"/>
</dbReference>
<dbReference type="InterPro" id="IPR027417">
    <property type="entry name" value="P-loop_NTPase"/>
</dbReference>
<dbReference type="NCBIfam" id="NF007613">
    <property type="entry name" value="PRK10261.1"/>
    <property type="match status" value="1"/>
</dbReference>
<dbReference type="NCBIfam" id="NF007739">
    <property type="entry name" value="PRK10419.1"/>
    <property type="match status" value="2"/>
</dbReference>
<dbReference type="NCBIfam" id="NF008453">
    <property type="entry name" value="PRK11308.1"/>
    <property type="match status" value="2"/>
</dbReference>
<dbReference type="PANTHER" id="PTHR43776:SF15">
    <property type="entry name" value="GLUTATHIONE IMPORT ATP-BINDING PROTEIN GSIA"/>
    <property type="match status" value="1"/>
</dbReference>
<dbReference type="PANTHER" id="PTHR43776">
    <property type="entry name" value="TRANSPORT ATP-BINDING PROTEIN"/>
    <property type="match status" value="1"/>
</dbReference>
<dbReference type="Pfam" id="PF00005">
    <property type="entry name" value="ABC_tran"/>
    <property type="match status" value="2"/>
</dbReference>
<dbReference type="Pfam" id="PF08352">
    <property type="entry name" value="oligo_HPY"/>
    <property type="match status" value="2"/>
</dbReference>
<dbReference type="SMART" id="SM00382">
    <property type="entry name" value="AAA"/>
    <property type="match status" value="2"/>
</dbReference>
<dbReference type="SUPFAM" id="SSF52540">
    <property type="entry name" value="P-loop containing nucleoside triphosphate hydrolases"/>
    <property type="match status" value="2"/>
</dbReference>
<dbReference type="PROSITE" id="PS00211">
    <property type="entry name" value="ABC_TRANSPORTER_1"/>
    <property type="match status" value="2"/>
</dbReference>
<dbReference type="PROSITE" id="PS50893">
    <property type="entry name" value="ABC_TRANSPORTER_2"/>
    <property type="match status" value="2"/>
</dbReference>
<comment type="function">
    <text evidence="1">Part of the ABC transporter complex GsiABCD involved in glutathione import. Responsible for energy coupling to the transport system.</text>
</comment>
<comment type="catalytic activity">
    <reaction evidence="1">
        <text>glutathione(out) + ATP + H2O = glutathione(in) + ADP + phosphate + H(+)</text>
        <dbReference type="Rhea" id="RHEA:29791"/>
        <dbReference type="ChEBI" id="CHEBI:15377"/>
        <dbReference type="ChEBI" id="CHEBI:15378"/>
        <dbReference type="ChEBI" id="CHEBI:30616"/>
        <dbReference type="ChEBI" id="CHEBI:43474"/>
        <dbReference type="ChEBI" id="CHEBI:57925"/>
        <dbReference type="ChEBI" id="CHEBI:456216"/>
        <dbReference type="EC" id="7.4.2.10"/>
    </reaction>
</comment>
<comment type="subunit">
    <text evidence="1">The complex is composed of two ATP-binding proteins (GsiA), two transmembrane proteins (GsiC and GsiD) and a solute-binding protein (GsiB).</text>
</comment>
<comment type="subcellular location">
    <subcellularLocation>
        <location evidence="1">Cell inner membrane</location>
        <topology evidence="1">Peripheral membrane protein</topology>
    </subcellularLocation>
</comment>
<comment type="similarity">
    <text evidence="3">Belongs to the ABC transporter superfamily. Glutathione importer (TC 3.A.1.5.11) family.</text>
</comment>
<comment type="sequence caution" evidence="3">
    <conflict type="erroneous initiation">
        <sequence resource="EMBL-CDS" id="ABF03043"/>
    </conflict>
</comment>
<reference key="1">
    <citation type="journal article" date="2006" name="BMC Genomics">
        <title>Complete genome sequence of Shigella flexneri 5b and comparison with Shigella flexneri 2a.</title>
        <authorList>
            <person name="Nie H."/>
            <person name="Yang F."/>
            <person name="Zhang X."/>
            <person name="Yang J."/>
            <person name="Chen L."/>
            <person name="Wang J."/>
            <person name="Xiong Z."/>
            <person name="Peng J."/>
            <person name="Sun L."/>
            <person name="Dong J."/>
            <person name="Xue Y."/>
            <person name="Xu X."/>
            <person name="Chen S."/>
            <person name="Yao Z."/>
            <person name="Shen Y."/>
            <person name="Jin Q."/>
        </authorList>
    </citation>
    <scope>NUCLEOTIDE SEQUENCE [LARGE SCALE GENOMIC DNA]</scope>
    <source>
        <strain>8401</strain>
    </source>
</reference>
<accession>Q0T6D3</accession>
<protein>
    <recommendedName>
        <fullName evidence="1">Glutathione import ATP-binding protein GsiA</fullName>
        <ecNumber evidence="1">7.4.2.10</ecNumber>
    </recommendedName>
</protein>
<organism>
    <name type="scientific">Shigella flexneri serotype 5b (strain 8401)</name>
    <dbReference type="NCBI Taxonomy" id="373384"/>
    <lineage>
        <taxon>Bacteria</taxon>
        <taxon>Pseudomonadati</taxon>
        <taxon>Pseudomonadota</taxon>
        <taxon>Gammaproteobacteria</taxon>
        <taxon>Enterobacterales</taxon>
        <taxon>Enterobacteriaceae</taxon>
        <taxon>Shigella</taxon>
    </lineage>
</organism>
<feature type="chain" id="PRO_0000280030" description="Glutathione import ATP-binding protein GsiA">
    <location>
        <begin position="1"/>
        <end position="623"/>
    </location>
</feature>
<feature type="domain" description="ABC transporter 1" evidence="2">
    <location>
        <begin position="15"/>
        <end position="269"/>
    </location>
</feature>
<feature type="domain" description="ABC transporter 2" evidence="2">
    <location>
        <begin position="314"/>
        <end position="564"/>
    </location>
</feature>
<feature type="binding site" evidence="2">
    <location>
        <begin position="49"/>
        <end position="56"/>
    </location>
    <ligand>
        <name>ATP</name>
        <dbReference type="ChEBI" id="CHEBI:30616"/>
    </ligand>
</feature>
<feature type="binding site" evidence="2">
    <location>
        <begin position="357"/>
        <end position="364"/>
    </location>
    <ligand>
        <name>ATP</name>
        <dbReference type="ChEBI" id="CHEBI:30616"/>
    </ligand>
</feature>